<organism>
    <name type="scientific">Shigella boydii serotype 4 (strain Sb227)</name>
    <dbReference type="NCBI Taxonomy" id="300268"/>
    <lineage>
        <taxon>Bacteria</taxon>
        <taxon>Pseudomonadati</taxon>
        <taxon>Pseudomonadota</taxon>
        <taxon>Gammaproteobacteria</taxon>
        <taxon>Enterobacterales</taxon>
        <taxon>Enterobacteriaceae</taxon>
        <taxon>Shigella</taxon>
    </lineage>
</organism>
<dbReference type="EMBL" id="CP000036">
    <property type="protein sequence ID" value="ABB66780.1"/>
    <property type="molecule type" value="Genomic_DNA"/>
</dbReference>
<dbReference type="RefSeq" id="WP_001288867.1">
    <property type="nucleotide sequence ID" value="NC_007613.1"/>
</dbReference>
<dbReference type="SMR" id="Q31YS8"/>
<dbReference type="KEGG" id="sbo:SBO_2210"/>
<dbReference type="HOGENOM" id="CLU_049853_0_0_6"/>
<dbReference type="Proteomes" id="UP000007067">
    <property type="component" value="Chromosome"/>
</dbReference>
<dbReference type="GO" id="GO:0005737">
    <property type="term" value="C:cytoplasm"/>
    <property type="evidence" value="ECO:0007669"/>
    <property type="project" value="UniProtKB-UniRule"/>
</dbReference>
<dbReference type="GO" id="GO:0009295">
    <property type="term" value="C:nucleoid"/>
    <property type="evidence" value="ECO:0007669"/>
    <property type="project" value="UniProtKB-SubCell"/>
</dbReference>
<dbReference type="GO" id="GO:0005509">
    <property type="term" value="F:calcium ion binding"/>
    <property type="evidence" value="ECO:0007669"/>
    <property type="project" value="UniProtKB-UniRule"/>
</dbReference>
<dbReference type="GO" id="GO:0051301">
    <property type="term" value="P:cell division"/>
    <property type="evidence" value="ECO:0007669"/>
    <property type="project" value="UniProtKB-KW"/>
</dbReference>
<dbReference type="GO" id="GO:0030261">
    <property type="term" value="P:chromosome condensation"/>
    <property type="evidence" value="ECO:0007669"/>
    <property type="project" value="UniProtKB-KW"/>
</dbReference>
<dbReference type="GO" id="GO:0007059">
    <property type="term" value="P:chromosome segregation"/>
    <property type="evidence" value="ECO:0007669"/>
    <property type="project" value="UniProtKB-UniRule"/>
</dbReference>
<dbReference type="GO" id="GO:0006260">
    <property type="term" value="P:DNA replication"/>
    <property type="evidence" value="ECO:0007669"/>
    <property type="project" value="UniProtKB-UniRule"/>
</dbReference>
<dbReference type="CDD" id="cd16337">
    <property type="entry name" value="MukF_C"/>
    <property type="match status" value="1"/>
</dbReference>
<dbReference type="CDD" id="cd16335">
    <property type="entry name" value="MukF_N"/>
    <property type="match status" value="1"/>
</dbReference>
<dbReference type="Gene3D" id="1.20.58.590">
    <property type="entry name" value="Chromosome partition protein MukF, middle domain"/>
    <property type="match status" value="1"/>
</dbReference>
<dbReference type="Gene3D" id="1.10.225.40">
    <property type="entry name" value="MukF, C-terminal domain"/>
    <property type="match status" value="1"/>
</dbReference>
<dbReference type="Gene3D" id="1.10.10.10">
    <property type="entry name" value="Winged helix-like DNA-binding domain superfamily/Winged helix DNA-binding domain"/>
    <property type="match status" value="1"/>
</dbReference>
<dbReference type="HAMAP" id="MF_01803">
    <property type="entry name" value="MukF"/>
    <property type="match status" value="1"/>
</dbReference>
<dbReference type="InterPro" id="IPR005582">
    <property type="entry name" value="Chromosome_partition_MukF"/>
</dbReference>
<dbReference type="InterPro" id="IPR033441">
    <property type="entry name" value="MukF_C"/>
</dbReference>
<dbReference type="InterPro" id="IPR038198">
    <property type="entry name" value="MukF_C_sf"/>
</dbReference>
<dbReference type="InterPro" id="IPR033440">
    <property type="entry name" value="MukF_M"/>
</dbReference>
<dbReference type="InterPro" id="IPR036141">
    <property type="entry name" value="MukF_M_sp"/>
</dbReference>
<dbReference type="InterPro" id="IPR033439">
    <property type="entry name" value="MukF_WHTH"/>
</dbReference>
<dbReference type="InterPro" id="IPR036388">
    <property type="entry name" value="WH-like_DNA-bd_sf"/>
</dbReference>
<dbReference type="InterPro" id="IPR036390">
    <property type="entry name" value="WH_DNA-bd_sf"/>
</dbReference>
<dbReference type="NCBIfam" id="NF003615">
    <property type="entry name" value="PRK05260.1"/>
    <property type="match status" value="1"/>
</dbReference>
<dbReference type="Pfam" id="PF03882">
    <property type="entry name" value="KicB"/>
    <property type="match status" value="1"/>
</dbReference>
<dbReference type="Pfam" id="PF17193">
    <property type="entry name" value="MukF_C"/>
    <property type="match status" value="1"/>
</dbReference>
<dbReference type="Pfam" id="PF17192">
    <property type="entry name" value="MukF_M"/>
    <property type="match status" value="1"/>
</dbReference>
<dbReference type="PIRSF" id="PIRSF018282">
    <property type="entry name" value="MukF"/>
    <property type="match status" value="1"/>
</dbReference>
<dbReference type="SUPFAM" id="SSF140570">
    <property type="entry name" value="MukF C-terminal domain-like"/>
    <property type="match status" value="1"/>
</dbReference>
<dbReference type="SUPFAM" id="SSF46785">
    <property type="entry name" value="Winged helix' DNA-binding domain"/>
    <property type="match status" value="1"/>
</dbReference>
<feature type="chain" id="PRO_1000069940" description="Chromosome partition protein MukF">
    <location>
        <begin position="1"/>
        <end position="440"/>
    </location>
</feature>
<feature type="region of interest" description="Leucine-zipper">
    <location>
        <begin position="208"/>
        <end position="236"/>
    </location>
</feature>
<accession>Q31YS8</accession>
<proteinExistence type="inferred from homology"/>
<reference key="1">
    <citation type="journal article" date="2005" name="Nucleic Acids Res.">
        <title>Genome dynamics and diversity of Shigella species, the etiologic agents of bacillary dysentery.</title>
        <authorList>
            <person name="Yang F."/>
            <person name="Yang J."/>
            <person name="Zhang X."/>
            <person name="Chen L."/>
            <person name="Jiang Y."/>
            <person name="Yan Y."/>
            <person name="Tang X."/>
            <person name="Wang J."/>
            <person name="Xiong Z."/>
            <person name="Dong J."/>
            <person name="Xue Y."/>
            <person name="Zhu Y."/>
            <person name="Xu X."/>
            <person name="Sun L."/>
            <person name="Chen S."/>
            <person name="Nie H."/>
            <person name="Peng J."/>
            <person name="Xu J."/>
            <person name="Wang Y."/>
            <person name="Yuan Z."/>
            <person name="Wen Y."/>
            <person name="Yao Z."/>
            <person name="Shen Y."/>
            <person name="Qiang B."/>
            <person name="Hou Y."/>
            <person name="Yu J."/>
            <person name="Jin Q."/>
        </authorList>
    </citation>
    <scope>NUCLEOTIDE SEQUENCE [LARGE SCALE GENOMIC DNA]</scope>
    <source>
        <strain>Sb227</strain>
    </source>
</reference>
<sequence length="440" mass="50610">MSEFSQTVPELVAWARKNDFSISLQVDRLSFLLAVATLNGERLDGEMSEGELVDAFRHVSDAFEQTSETIGVRANNAINDMVRQRLLNRFTSEQAEGNAIYRLTPLGIGITDYYIRQREFSTLRLSMQLSIVAGELKRAADAAEEGGDEFHWHRNVYAPLKYSVAEIFDSIDLTQRLMDEQQQQVKDDIAQLLNKDWRAAISSCELLLSETSGTLRELQDTLEAAGDKLQANLLRIQDATMTHDDLHFVDRLVFDLQSKLDRIISWGQQSIDLWIGYDRHVHKFIRTAIDMDKNRVFAQRLRQSVQTYFDEPWALTYANADRLLDMRDEEMALRDEEVTGELPEDLEYEEFNEIREQLAAIIEEQLAVYKTRQVPLDLGLVVREYLSQYPRARHFDVARIVIDQAVRLGVAQADFTGLPAKWQPINDYGAKVQAHVIDKY</sequence>
<name>MUKF_SHIBS</name>
<keyword id="KW-0106">Calcium</keyword>
<keyword id="KW-0131">Cell cycle</keyword>
<keyword id="KW-0132">Cell division</keyword>
<keyword id="KW-0159">Chromosome partition</keyword>
<keyword id="KW-0963">Cytoplasm</keyword>
<keyword id="KW-0226">DNA condensation</keyword>
<gene>
    <name evidence="1" type="primary">mukF</name>
    <name type="ordered locus">SBO_2210</name>
</gene>
<protein>
    <recommendedName>
        <fullName evidence="1">Chromosome partition protein MukF</fullName>
    </recommendedName>
</protein>
<comment type="function">
    <text evidence="1">Involved in chromosome condensation, segregation and cell cycle progression. May participate in facilitating chromosome segregation by condensation DNA from both sides of a centrally located replisome during cell division. Not required for mini-F plasmid partitioning. Probably acts via its interaction with MukB and MukE. Overexpression results in anucleate cells. It has a calcium binding activity.</text>
</comment>
<comment type="subunit">
    <text evidence="1">Interacts, and probably forms a ternary complex, with MukE and MukB via its C-terminal region. The complex formation is stimulated by calcium or magnesium. It is required for an interaction between MukE and MukB.</text>
</comment>
<comment type="subcellular location">
    <subcellularLocation>
        <location evidence="1">Cytoplasm</location>
        <location evidence="1">Nucleoid</location>
    </subcellularLocation>
    <text evidence="1">Restricted to the nucleoid region.</text>
</comment>
<comment type="similarity">
    <text evidence="1">Belongs to the MukF family.</text>
</comment>
<evidence type="ECO:0000255" key="1">
    <source>
        <dbReference type="HAMAP-Rule" id="MF_01803"/>
    </source>
</evidence>